<comment type="function">
    <text evidence="1">Catalyzes the formation of phosphatidylethanolamine (PtdEtn) from phosphatidylserine (PtdSer).</text>
</comment>
<comment type="catalytic activity">
    <reaction evidence="1">
        <text>a 1,2-diacyl-sn-glycero-3-phospho-L-serine + H(+) = a 1,2-diacyl-sn-glycero-3-phosphoethanolamine + CO2</text>
        <dbReference type="Rhea" id="RHEA:20828"/>
        <dbReference type="ChEBI" id="CHEBI:15378"/>
        <dbReference type="ChEBI" id="CHEBI:16526"/>
        <dbReference type="ChEBI" id="CHEBI:57262"/>
        <dbReference type="ChEBI" id="CHEBI:64612"/>
        <dbReference type="EC" id="4.1.1.65"/>
    </reaction>
</comment>
<comment type="cofactor">
    <cofactor evidence="1">
        <name>pyruvate</name>
        <dbReference type="ChEBI" id="CHEBI:15361"/>
    </cofactor>
    <text evidence="1">Binds 1 pyruvoyl group covalently per subunit.</text>
</comment>
<comment type="pathway">
    <text evidence="1">Phospholipid metabolism; phosphatidylethanolamine biosynthesis; phosphatidylethanolamine from CDP-diacylglycerol: step 2/2.</text>
</comment>
<comment type="subunit">
    <text evidence="1">Heterodimer of a large membrane-associated beta subunit and a small pyruvoyl-containing alpha subunit.</text>
</comment>
<comment type="subcellular location">
    <subcellularLocation>
        <location evidence="1">Cell membrane</location>
        <topology evidence="1">Peripheral membrane protein</topology>
    </subcellularLocation>
</comment>
<comment type="PTM">
    <text evidence="1">Is synthesized initially as an inactive proenzyme. Formation of the active enzyme involves a self-maturation process in which the active site pyruvoyl group is generated from an internal serine residue via an autocatalytic post-translational modification. Two non-identical subunits are generated from the proenzyme in this reaction, and the pyruvate is formed at the N-terminus of the alpha chain, which is derived from the carboxyl end of the proenzyme. The autoendoproteolytic cleavage occurs by a canonical serine protease mechanism, in which the side chain hydroxyl group of the serine supplies its oxygen atom to form the C-terminus of the beta chain, while the remainder of the serine residue undergoes an oxidative deamination to produce ammonia and the pyruvoyl prosthetic group on the alpha chain. During this reaction, the Ser that is part of the protease active site of the proenzyme becomes the pyruvoyl prosthetic group, which constitutes an essential element of the active site of the mature decarboxylase.</text>
</comment>
<comment type="similarity">
    <text evidence="1">Belongs to the phosphatidylserine decarboxylase family. PSD-B subfamily. Prokaryotic type I sub-subfamily.</text>
</comment>
<organism>
    <name type="scientific">Francisella tularensis subsp. tularensis (strain FSC 198)</name>
    <dbReference type="NCBI Taxonomy" id="393115"/>
    <lineage>
        <taxon>Bacteria</taxon>
        <taxon>Pseudomonadati</taxon>
        <taxon>Pseudomonadota</taxon>
        <taxon>Gammaproteobacteria</taxon>
        <taxon>Thiotrichales</taxon>
        <taxon>Francisellaceae</taxon>
        <taxon>Francisella</taxon>
    </lineage>
</organism>
<dbReference type="EC" id="4.1.1.65" evidence="1"/>
<dbReference type="EMBL" id="AM286280">
    <property type="protein sequence ID" value="CAL08400.1"/>
    <property type="molecule type" value="Genomic_DNA"/>
</dbReference>
<dbReference type="SMR" id="Q14J65"/>
<dbReference type="KEGG" id="ftf:FTF0384c"/>
<dbReference type="HOGENOM" id="CLU_029061_4_1_6"/>
<dbReference type="UniPathway" id="UPA00558">
    <property type="reaction ID" value="UER00616"/>
</dbReference>
<dbReference type="GO" id="GO:0005886">
    <property type="term" value="C:plasma membrane"/>
    <property type="evidence" value="ECO:0007669"/>
    <property type="project" value="UniProtKB-SubCell"/>
</dbReference>
<dbReference type="GO" id="GO:0004609">
    <property type="term" value="F:phosphatidylserine decarboxylase activity"/>
    <property type="evidence" value="ECO:0007669"/>
    <property type="project" value="UniProtKB-UniRule"/>
</dbReference>
<dbReference type="GO" id="GO:0006646">
    <property type="term" value="P:phosphatidylethanolamine biosynthetic process"/>
    <property type="evidence" value="ECO:0007669"/>
    <property type="project" value="UniProtKB-UniRule"/>
</dbReference>
<dbReference type="HAMAP" id="MF_00662">
    <property type="entry name" value="PS_decarb_PSD_B_type1"/>
    <property type="match status" value="1"/>
</dbReference>
<dbReference type="InterPro" id="IPR003817">
    <property type="entry name" value="PS_Dcarbxylase"/>
</dbReference>
<dbReference type="InterPro" id="IPR033177">
    <property type="entry name" value="PSD-B"/>
</dbReference>
<dbReference type="InterPro" id="IPR033178">
    <property type="entry name" value="PSD_type1_pro"/>
</dbReference>
<dbReference type="NCBIfam" id="TIGR00163">
    <property type="entry name" value="PS_decarb"/>
    <property type="match status" value="1"/>
</dbReference>
<dbReference type="PANTHER" id="PTHR10067">
    <property type="entry name" value="PHOSPHATIDYLSERINE DECARBOXYLASE"/>
    <property type="match status" value="1"/>
</dbReference>
<dbReference type="PANTHER" id="PTHR10067:SF6">
    <property type="entry name" value="PHOSPHATIDYLSERINE DECARBOXYLASE PROENZYME, MITOCHONDRIAL"/>
    <property type="match status" value="1"/>
</dbReference>
<dbReference type="Pfam" id="PF02666">
    <property type="entry name" value="PS_Dcarbxylase"/>
    <property type="match status" value="1"/>
</dbReference>
<proteinExistence type="inferred from homology"/>
<gene>
    <name evidence="1" type="primary">psd</name>
    <name type="ordered locus">FTF0384c</name>
</gene>
<protein>
    <recommendedName>
        <fullName evidence="1">Phosphatidylserine decarboxylase proenzyme</fullName>
        <ecNumber evidence="1">4.1.1.65</ecNumber>
    </recommendedName>
    <component>
        <recommendedName>
            <fullName evidence="1">Phosphatidylserine decarboxylase alpha chain</fullName>
        </recommendedName>
    </component>
    <component>
        <recommendedName>
            <fullName evidence="1">Phosphatidylserine decarboxylase beta chain</fullName>
        </recommendedName>
    </component>
</protein>
<accession>Q14J65</accession>
<sequence length="283" mass="32127">MRDNLFIYLQYLLPHTLTSRLVSKLADSENKIIKNHLIKLAIKKFNINLVEAKETDISKYKSFNDFFIRELKDDLRPISNDKNVISSPADGVLSQFGTITDNSLIQAKGKLFSLESLIASSSTTSFTKFATIYLSPKDYHRVHMPIDGKLTKMVYIPGKLFSVNKITTSKVDNLFAKNERLICYFDTIIGEIAVIFVGALLVAGIETVWHGKIAPNYYKDIQTWDYNSAKFNIKFNKGDILGWFNFGSTVIILTSGNNVSFKFEENKNNIKIQVNQDLALITE</sequence>
<name>PSD_FRAT1</name>
<feature type="chain" id="PRO_0000262113" description="Phosphatidylserine decarboxylase beta chain" evidence="1">
    <location>
        <begin position="1"/>
        <end position="247"/>
    </location>
</feature>
<feature type="chain" id="PRO_0000262114" description="Phosphatidylserine decarboxylase alpha chain" evidence="1">
    <location>
        <begin position="248"/>
        <end position="283"/>
    </location>
</feature>
<feature type="active site" description="Charge relay system; for autoendoproteolytic cleavage activity" evidence="1">
    <location>
        <position position="90"/>
    </location>
</feature>
<feature type="active site" description="Charge relay system; for autoendoproteolytic cleavage activity" evidence="1">
    <location>
        <position position="143"/>
    </location>
</feature>
<feature type="active site" description="Charge relay system; for autoendoproteolytic cleavage activity" evidence="1">
    <location>
        <position position="248"/>
    </location>
</feature>
<feature type="active site" description="Schiff-base intermediate with substrate; via pyruvic acid; for decarboxylase activity" evidence="1">
    <location>
        <position position="248"/>
    </location>
</feature>
<feature type="site" description="Cleavage (non-hydrolytic); by autocatalysis" evidence="1">
    <location>
        <begin position="247"/>
        <end position="248"/>
    </location>
</feature>
<feature type="modified residue" description="Pyruvic acid (Ser); by autocatalysis" evidence="1">
    <location>
        <position position="248"/>
    </location>
</feature>
<evidence type="ECO:0000255" key="1">
    <source>
        <dbReference type="HAMAP-Rule" id="MF_00662"/>
    </source>
</evidence>
<keyword id="KW-1003">Cell membrane</keyword>
<keyword id="KW-0210">Decarboxylase</keyword>
<keyword id="KW-0444">Lipid biosynthesis</keyword>
<keyword id="KW-0443">Lipid metabolism</keyword>
<keyword id="KW-0456">Lyase</keyword>
<keyword id="KW-0472">Membrane</keyword>
<keyword id="KW-0594">Phospholipid biosynthesis</keyword>
<keyword id="KW-1208">Phospholipid metabolism</keyword>
<keyword id="KW-0670">Pyruvate</keyword>
<keyword id="KW-0865">Zymogen</keyword>
<reference key="1">
    <citation type="journal article" date="2007" name="PLoS ONE">
        <title>Genome sequencing shows that European isolates of Francisella tularensis subspecies tularensis are almost identical to US laboratory strain Schu S4.</title>
        <authorList>
            <person name="Chaudhuri R.R."/>
            <person name="Ren C.-P."/>
            <person name="Desmond L."/>
            <person name="Vincent G.A."/>
            <person name="Silman N.J."/>
            <person name="Brehm J.K."/>
            <person name="Elmore M.J."/>
            <person name="Hudson M.J."/>
            <person name="Forsman M."/>
            <person name="Isherwood K.E."/>
            <person name="Gurycova D."/>
            <person name="Minton N.P."/>
            <person name="Titball R.W."/>
            <person name="Pallen M.J."/>
            <person name="Vipond R."/>
        </authorList>
    </citation>
    <scope>NUCLEOTIDE SEQUENCE [LARGE SCALE GENOMIC DNA]</scope>
    <source>
        <strain>FSC 198</strain>
    </source>
</reference>